<gene>
    <name type="primary">yddM</name>
    <name type="ordered locus">b1477</name>
    <name type="ordered locus">JW5908</name>
</gene>
<feature type="chain" id="PRO_0000149759" description="Uncharacterized HTH-type transcriptional regulator YddM">
    <location>
        <begin position="1"/>
        <end position="94"/>
    </location>
</feature>
<feature type="domain" description="HTH cro/C1-type" evidence="1">
    <location>
        <begin position="13"/>
        <end position="67"/>
    </location>
</feature>
<feature type="DNA-binding region" description="H-T-H motif" evidence="1">
    <location>
        <begin position="24"/>
        <end position="43"/>
    </location>
</feature>
<proteinExistence type="inferred from homology"/>
<sequence>MKMANHPRPGDIIQESLDELNVSLREFARAMEIAPSTASRLLTGKAALTPEMAIKLSVVIGSSPQMWLNLQNAWSLAEAEKTVDVSRLRRLVTQ</sequence>
<keyword id="KW-0238">DNA-binding</keyword>
<keyword id="KW-1185">Reference proteome</keyword>
<keyword id="KW-0804">Transcription</keyword>
<keyword id="KW-0805">Transcription regulation</keyword>
<protein>
    <recommendedName>
        <fullName>Uncharacterized HTH-type transcriptional regulator YddM</fullName>
    </recommendedName>
</protein>
<dbReference type="EMBL" id="U00096">
    <property type="protein sequence ID" value="AAD13441.2"/>
    <property type="molecule type" value="Genomic_DNA"/>
</dbReference>
<dbReference type="EMBL" id="AP009048">
    <property type="protein sequence ID" value="BAE76451.1"/>
    <property type="status" value="ALT_INIT"/>
    <property type="molecule type" value="Genomic_DNA"/>
</dbReference>
<dbReference type="PIR" id="H64900">
    <property type="entry name" value="H64900"/>
</dbReference>
<dbReference type="RefSeq" id="NP_415994.4">
    <property type="nucleotide sequence ID" value="NC_000913.3"/>
</dbReference>
<dbReference type="RefSeq" id="WP_000781370.1">
    <property type="nucleotide sequence ID" value="NZ_STEB01000054.1"/>
</dbReference>
<dbReference type="SMR" id="P67699"/>
<dbReference type="BioGRID" id="4262904">
    <property type="interactions" value="93"/>
</dbReference>
<dbReference type="FunCoup" id="P67699">
    <property type="interactions" value="1"/>
</dbReference>
<dbReference type="STRING" id="511145.b1477"/>
<dbReference type="jPOST" id="P67699"/>
<dbReference type="PaxDb" id="511145-b1477"/>
<dbReference type="EnsemblBacteria" id="AAD13441">
    <property type="protein sequence ID" value="AAD13441"/>
    <property type="gene ID" value="b1477"/>
</dbReference>
<dbReference type="GeneID" id="946040"/>
<dbReference type="KEGG" id="ecj:JW5908"/>
<dbReference type="KEGG" id="eco:b1477"/>
<dbReference type="KEGG" id="ecoc:C3026_08565"/>
<dbReference type="PATRIC" id="fig|1411691.4.peg.790"/>
<dbReference type="EchoBASE" id="EB3546"/>
<dbReference type="eggNOG" id="COG3093">
    <property type="taxonomic scope" value="Bacteria"/>
</dbReference>
<dbReference type="HOGENOM" id="CLU_140230_2_1_6"/>
<dbReference type="InParanoid" id="P67699"/>
<dbReference type="OMA" id="ESWLIMQ"/>
<dbReference type="OrthoDB" id="9793869at2"/>
<dbReference type="PhylomeDB" id="P67699"/>
<dbReference type="BioCyc" id="EcoCyc:G6774-MONOMER"/>
<dbReference type="PRO" id="PR:P67699"/>
<dbReference type="Proteomes" id="UP000000625">
    <property type="component" value="Chromosome"/>
</dbReference>
<dbReference type="GO" id="GO:0003677">
    <property type="term" value="F:DNA binding"/>
    <property type="evidence" value="ECO:0007669"/>
    <property type="project" value="UniProtKB-KW"/>
</dbReference>
<dbReference type="GO" id="GO:0006355">
    <property type="term" value="P:regulation of DNA-templated transcription"/>
    <property type="evidence" value="ECO:0000269"/>
    <property type="project" value="EcoCyc"/>
</dbReference>
<dbReference type="Gene3D" id="1.10.260.40">
    <property type="entry name" value="lambda repressor-like DNA-binding domains"/>
    <property type="match status" value="1"/>
</dbReference>
<dbReference type="InterPro" id="IPR001387">
    <property type="entry name" value="Cro/C1-type_HTH"/>
</dbReference>
<dbReference type="InterPro" id="IPR010982">
    <property type="entry name" value="Lambda_DNA-bd_dom_sf"/>
</dbReference>
<dbReference type="InterPro" id="IPR013430">
    <property type="entry name" value="Toxin_antidote_HigA"/>
</dbReference>
<dbReference type="NCBIfam" id="TIGR02607">
    <property type="entry name" value="antidote_HigA"/>
    <property type="match status" value="1"/>
</dbReference>
<dbReference type="PANTHER" id="PTHR36924">
    <property type="entry name" value="ANTITOXIN HIGA-1"/>
    <property type="match status" value="1"/>
</dbReference>
<dbReference type="PANTHER" id="PTHR36924:SF1">
    <property type="entry name" value="ANTITOXIN HIGA-1"/>
    <property type="match status" value="1"/>
</dbReference>
<dbReference type="Pfam" id="PF01381">
    <property type="entry name" value="HTH_3"/>
    <property type="match status" value="1"/>
</dbReference>
<dbReference type="SMART" id="SM00530">
    <property type="entry name" value="HTH_XRE"/>
    <property type="match status" value="1"/>
</dbReference>
<dbReference type="SUPFAM" id="SSF47413">
    <property type="entry name" value="lambda repressor-like DNA-binding domains"/>
    <property type="match status" value="1"/>
</dbReference>
<dbReference type="PROSITE" id="PS50943">
    <property type="entry name" value="HTH_CROC1"/>
    <property type="match status" value="1"/>
</dbReference>
<name>YDDM_ECOLI</name>
<comment type="similarity">
    <text evidence="2">Belongs to the VapA/VapI family.</text>
</comment>
<comment type="sequence caution" evidence="2">
    <conflict type="erroneous initiation">
        <sequence resource="EMBL-CDS" id="BAE76451"/>
    </conflict>
    <text>Extended N-terminus.</text>
</comment>
<organism>
    <name type="scientific">Escherichia coli (strain K12)</name>
    <dbReference type="NCBI Taxonomy" id="83333"/>
    <lineage>
        <taxon>Bacteria</taxon>
        <taxon>Pseudomonadati</taxon>
        <taxon>Pseudomonadota</taxon>
        <taxon>Gammaproteobacteria</taxon>
        <taxon>Enterobacterales</taxon>
        <taxon>Enterobacteriaceae</taxon>
        <taxon>Escherichia</taxon>
    </lineage>
</organism>
<reference key="1">
    <citation type="journal article" date="1997" name="Science">
        <title>The complete genome sequence of Escherichia coli K-12.</title>
        <authorList>
            <person name="Blattner F.R."/>
            <person name="Plunkett G. III"/>
            <person name="Bloch C.A."/>
            <person name="Perna N.T."/>
            <person name="Burland V."/>
            <person name="Riley M."/>
            <person name="Collado-Vides J."/>
            <person name="Glasner J.D."/>
            <person name="Rode C.K."/>
            <person name="Mayhew G.F."/>
            <person name="Gregor J."/>
            <person name="Davis N.W."/>
            <person name="Kirkpatrick H.A."/>
            <person name="Goeden M.A."/>
            <person name="Rose D.J."/>
            <person name="Mau B."/>
            <person name="Shao Y."/>
        </authorList>
    </citation>
    <scope>NUCLEOTIDE SEQUENCE [LARGE SCALE GENOMIC DNA]</scope>
    <source>
        <strain>K12 / MG1655 / ATCC 47076</strain>
    </source>
</reference>
<reference key="2">
    <citation type="journal article" date="2006" name="Mol. Syst. Biol.">
        <title>Highly accurate genome sequences of Escherichia coli K-12 strains MG1655 and W3110.</title>
        <authorList>
            <person name="Hayashi K."/>
            <person name="Morooka N."/>
            <person name="Yamamoto Y."/>
            <person name="Fujita K."/>
            <person name="Isono K."/>
            <person name="Choi S."/>
            <person name="Ohtsubo E."/>
            <person name="Baba T."/>
            <person name="Wanner B.L."/>
            <person name="Mori H."/>
            <person name="Horiuchi T."/>
        </authorList>
    </citation>
    <scope>NUCLEOTIDE SEQUENCE [LARGE SCALE GENOMIC DNA]</scope>
    <source>
        <strain>K12 / W3110 / ATCC 27325 / DSM 5911</strain>
    </source>
</reference>
<evidence type="ECO:0000255" key="1">
    <source>
        <dbReference type="PROSITE-ProRule" id="PRU00257"/>
    </source>
</evidence>
<evidence type="ECO:0000305" key="2"/>
<accession>P67699</accession>
<accession>P76125</accession>
<accession>Q2MBA5</accession>